<protein>
    <recommendedName>
        <fullName>Transmembrane protein 8B</fullName>
    </recommendedName>
    <alternativeName>
        <fullName>Protein NGX6</fullName>
    </alternativeName>
</protein>
<gene>
    <name type="primary">Tmem8b</name>
</gene>
<sequence length="472" mass="52114">MNMPQSLGTQPLPPEPPSLGTPIEGSGAIAPTEHCWPVRPTLRNELDTFSVHFYIFFGPSVALPPERPAVFALRLLPVLDSGGVLSLELQLNASSLRQENVTVFGCLTHEVPLSLGDAAVTCSKESLAGFLLSVSATSRVARLRIPFPQTGTWFLTLRSLCGVGPRFVRCRNATAEVRLRTFLSPCVDDCGPYGQCKLLRTHNYLYAACECKAGWRGWGCTDSADALTYGFQLLSTLLLCLSNLMFLPPVVLAIRSRYVLEAAVYTFTMFFSTFYHACDQPGIVVFCIMDYDVLQFCDFLGSLMSVWVTVIAMARLQPVIKQVLYLLGAMLLSMALQLDRHGLWNLLGPSLFALGILATAWTVRSVRRRHCYPPTWRRWLFYLCPGSLIAGSAVLLYAFVETRDNYFYIHSIWHMLIAGSVGFLLPPRAKTDRRVPSGARARGCGYQLCINEQEELGLVGPGGTTVSSICVS</sequence>
<proteinExistence type="evidence at transcript level"/>
<evidence type="ECO:0000250" key="1"/>
<evidence type="ECO:0000250" key="2">
    <source>
        <dbReference type="UniProtKB" id="A6NDV4"/>
    </source>
</evidence>
<evidence type="ECO:0000255" key="3"/>
<evidence type="ECO:0000256" key="4">
    <source>
        <dbReference type="SAM" id="MobiDB-lite"/>
    </source>
</evidence>
<evidence type="ECO:0000305" key="5"/>
<dbReference type="EMBL" id="AL732626">
    <property type="status" value="NOT_ANNOTATED_CDS"/>
    <property type="molecule type" value="Genomic_DNA"/>
</dbReference>
<dbReference type="EMBL" id="BC147569">
    <property type="protein sequence ID" value="AAI47570.1"/>
    <property type="molecule type" value="mRNA"/>
</dbReference>
<dbReference type="EMBL" id="BC147574">
    <property type="protein sequence ID" value="AAI47575.1"/>
    <property type="molecule type" value="mRNA"/>
</dbReference>
<dbReference type="EMBL" id="BC151067">
    <property type="protein sequence ID" value="AAI51068.1"/>
    <property type="molecule type" value="mRNA"/>
</dbReference>
<dbReference type="EMBL" id="BC151070">
    <property type="protein sequence ID" value="AAI51071.1"/>
    <property type="molecule type" value="mRNA"/>
</dbReference>
<dbReference type="CCDS" id="CCDS51168.1"/>
<dbReference type="RefSeq" id="NP_001078977.1">
    <property type="nucleotide sequence ID" value="NM_001085508.2"/>
</dbReference>
<dbReference type="RefSeq" id="XP_011248332.1">
    <property type="nucleotide sequence ID" value="XM_011250030.4"/>
</dbReference>
<dbReference type="RefSeq" id="XP_036020003.1">
    <property type="nucleotide sequence ID" value="XM_036164110.1"/>
</dbReference>
<dbReference type="SMR" id="B1AWJ5"/>
<dbReference type="FunCoup" id="B1AWJ5">
    <property type="interactions" value="353"/>
</dbReference>
<dbReference type="STRING" id="10090.ENSMUSP00000103497"/>
<dbReference type="GlyCosmos" id="B1AWJ5">
    <property type="glycosylation" value="1 site, No reported glycans"/>
</dbReference>
<dbReference type="GlyGen" id="B1AWJ5">
    <property type="glycosylation" value="1 site, 1 N-linked glycan (1 site)"/>
</dbReference>
<dbReference type="iPTMnet" id="B1AWJ5"/>
<dbReference type="PhosphoSitePlus" id="B1AWJ5"/>
<dbReference type="PaxDb" id="10090-ENSMUSP00000103497"/>
<dbReference type="ProteomicsDB" id="259435"/>
<dbReference type="Antibodypedia" id="26101">
    <property type="antibodies" value="151 antibodies from 20 providers"/>
</dbReference>
<dbReference type="Ensembl" id="ENSMUST00000107864.8">
    <property type="protein sequence ID" value="ENSMUSP00000103496.2"/>
    <property type="gene ID" value="ENSMUSG00000078716.11"/>
</dbReference>
<dbReference type="Ensembl" id="ENSMUST00000107865.9">
    <property type="protein sequence ID" value="ENSMUSP00000103497.3"/>
    <property type="gene ID" value="ENSMUSG00000078716.11"/>
</dbReference>
<dbReference type="Ensembl" id="ENSMUST00000167153.8">
    <property type="protein sequence ID" value="ENSMUSP00000129760.2"/>
    <property type="gene ID" value="ENSMUSG00000078716.11"/>
</dbReference>
<dbReference type="GeneID" id="242409"/>
<dbReference type="KEGG" id="mmu:242409"/>
<dbReference type="UCSC" id="uc008sqv.1">
    <property type="organism name" value="mouse"/>
</dbReference>
<dbReference type="AGR" id="MGI:2441680"/>
<dbReference type="CTD" id="51754"/>
<dbReference type="MGI" id="MGI:2441680">
    <property type="gene designation" value="Tmem8b"/>
</dbReference>
<dbReference type="VEuPathDB" id="HostDB:ENSMUSG00000078716"/>
<dbReference type="eggNOG" id="ENOG502QQ7Q">
    <property type="taxonomic scope" value="Eukaryota"/>
</dbReference>
<dbReference type="GeneTree" id="ENSGT00940000157861"/>
<dbReference type="HOGENOM" id="CLU_012979_1_0_1"/>
<dbReference type="InParanoid" id="B1AWJ5"/>
<dbReference type="OMA" id="PEDTMMA"/>
<dbReference type="PhylomeDB" id="B1AWJ5"/>
<dbReference type="TreeFam" id="TF331003"/>
<dbReference type="BioGRID-ORCS" id="242409">
    <property type="hits" value="0 hits in 77 CRISPR screens"/>
</dbReference>
<dbReference type="PRO" id="PR:B1AWJ5"/>
<dbReference type="Proteomes" id="UP000000589">
    <property type="component" value="Chromosome 4"/>
</dbReference>
<dbReference type="RNAct" id="B1AWJ5">
    <property type="molecule type" value="protein"/>
</dbReference>
<dbReference type="Bgee" id="ENSMUSG00000078716">
    <property type="expression patterns" value="Expressed in spermatid and 60 other cell types or tissues"/>
</dbReference>
<dbReference type="ExpressionAtlas" id="B1AWJ5">
    <property type="expression patterns" value="baseline and differential"/>
</dbReference>
<dbReference type="GO" id="GO:0005783">
    <property type="term" value="C:endoplasmic reticulum"/>
    <property type="evidence" value="ECO:0007669"/>
    <property type="project" value="UniProtKB-SubCell"/>
</dbReference>
<dbReference type="GO" id="GO:0005739">
    <property type="term" value="C:mitochondrion"/>
    <property type="evidence" value="ECO:0007669"/>
    <property type="project" value="UniProtKB-SubCell"/>
</dbReference>
<dbReference type="GO" id="GO:0005634">
    <property type="term" value="C:nucleus"/>
    <property type="evidence" value="ECO:0007669"/>
    <property type="project" value="UniProtKB-SubCell"/>
</dbReference>
<dbReference type="GO" id="GO:0005886">
    <property type="term" value="C:plasma membrane"/>
    <property type="evidence" value="ECO:0007669"/>
    <property type="project" value="UniProtKB-SubCell"/>
</dbReference>
<dbReference type="GO" id="GO:0007155">
    <property type="term" value="P:cell adhesion"/>
    <property type="evidence" value="ECO:0007669"/>
    <property type="project" value="UniProtKB-KW"/>
</dbReference>
<dbReference type="InterPro" id="IPR000742">
    <property type="entry name" value="EGF-like_dom"/>
</dbReference>
<dbReference type="InterPro" id="IPR021910">
    <property type="entry name" value="NGX6/PGAP6/MYMK"/>
</dbReference>
<dbReference type="PANTHER" id="PTHR14319">
    <property type="entry name" value="FIVE-SPAN TRANSMEMBRANE PROTEIN M83"/>
    <property type="match status" value="1"/>
</dbReference>
<dbReference type="PANTHER" id="PTHR14319:SF6">
    <property type="entry name" value="TRANSMEMBRANE PROTEIN 8B"/>
    <property type="match status" value="1"/>
</dbReference>
<dbReference type="Pfam" id="PF12036">
    <property type="entry name" value="DUF3522"/>
    <property type="match status" value="1"/>
</dbReference>
<dbReference type="PROSITE" id="PS00022">
    <property type="entry name" value="EGF_1"/>
    <property type="match status" value="1"/>
</dbReference>
<dbReference type="PROSITE" id="PS01186">
    <property type="entry name" value="EGF_2"/>
    <property type="match status" value="1"/>
</dbReference>
<feature type="chain" id="PRO_0000333040" description="Transmembrane protein 8B">
    <location>
        <begin position="1"/>
        <end position="472"/>
    </location>
</feature>
<feature type="topological domain" description="Extracellular" evidence="3">
    <location>
        <begin position="1"/>
        <end position="233"/>
    </location>
</feature>
<feature type="transmembrane region" description="Helical" evidence="3">
    <location>
        <begin position="234"/>
        <end position="254"/>
    </location>
</feature>
<feature type="topological domain" description="Cytoplasmic" evidence="3">
    <location>
        <begin position="255"/>
        <end position="257"/>
    </location>
</feature>
<feature type="transmembrane region" description="Helical" evidence="3">
    <location>
        <begin position="258"/>
        <end position="277"/>
    </location>
</feature>
<feature type="topological domain" description="Extracellular" evidence="3">
    <location>
        <begin position="278"/>
        <end position="292"/>
    </location>
</feature>
<feature type="transmembrane region" description="Helical" evidence="3">
    <location>
        <begin position="293"/>
        <end position="313"/>
    </location>
</feature>
<feature type="topological domain" description="Cytoplasmic" evidence="3">
    <location>
        <begin position="314"/>
        <end position="315"/>
    </location>
</feature>
<feature type="transmembrane region" description="Helical" evidence="3">
    <location>
        <begin position="316"/>
        <end position="336"/>
    </location>
</feature>
<feature type="topological domain" description="Extracellular" evidence="3">
    <location>
        <begin position="337"/>
        <end position="342"/>
    </location>
</feature>
<feature type="transmembrane region" description="Helical" evidence="3">
    <location>
        <begin position="343"/>
        <end position="363"/>
    </location>
</feature>
<feature type="topological domain" description="Cytoplasmic" evidence="3">
    <location>
        <begin position="364"/>
        <end position="379"/>
    </location>
</feature>
<feature type="transmembrane region" description="Helical" evidence="3">
    <location>
        <begin position="380"/>
        <end position="400"/>
    </location>
</feature>
<feature type="topological domain" description="Extracellular" evidence="3">
    <location>
        <begin position="401"/>
        <end position="405"/>
    </location>
</feature>
<feature type="transmembrane region" description="Helical" evidence="3">
    <location>
        <begin position="406"/>
        <end position="426"/>
    </location>
</feature>
<feature type="topological domain" description="Cytoplasmic" evidence="3">
    <location>
        <begin position="427"/>
        <end position="472"/>
    </location>
</feature>
<feature type="domain" description="EGF-like">
    <location>
        <begin position="182"/>
        <end position="221"/>
    </location>
</feature>
<feature type="region of interest" description="Disordered" evidence="4">
    <location>
        <begin position="1"/>
        <end position="24"/>
    </location>
</feature>
<feature type="compositionally biased region" description="Low complexity" evidence="4">
    <location>
        <begin position="1"/>
        <end position="10"/>
    </location>
</feature>
<feature type="glycosylation site" description="N-linked (GlcNAc...) asparagine" evidence="3">
    <location>
        <position position="100"/>
    </location>
</feature>
<feature type="disulfide bond" evidence="1">
    <location>
        <begin position="186"/>
        <end position="196"/>
    </location>
</feature>
<feature type="disulfide bond" evidence="1">
    <location>
        <begin position="190"/>
        <end position="209"/>
    </location>
</feature>
<feature type="disulfide bond" evidence="1">
    <location>
        <begin position="211"/>
        <end position="220"/>
    </location>
</feature>
<accession>B1AWJ5</accession>
<accession>B9EJV2</accession>
<name>TMM8B_MOUSE</name>
<reference key="1">
    <citation type="journal article" date="2009" name="PLoS Biol.">
        <title>Lineage-specific biology revealed by a finished genome assembly of the mouse.</title>
        <authorList>
            <person name="Church D.M."/>
            <person name="Goodstadt L."/>
            <person name="Hillier L.W."/>
            <person name="Zody M.C."/>
            <person name="Goldstein S."/>
            <person name="She X."/>
            <person name="Bult C.J."/>
            <person name="Agarwala R."/>
            <person name="Cherry J.L."/>
            <person name="DiCuccio M."/>
            <person name="Hlavina W."/>
            <person name="Kapustin Y."/>
            <person name="Meric P."/>
            <person name="Maglott D."/>
            <person name="Birtle Z."/>
            <person name="Marques A.C."/>
            <person name="Graves T."/>
            <person name="Zhou S."/>
            <person name="Teague B."/>
            <person name="Potamousis K."/>
            <person name="Churas C."/>
            <person name="Place M."/>
            <person name="Herschleb J."/>
            <person name="Runnheim R."/>
            <person name="Forrest D."/>
            <person name="Amos-Landgraf J."/>
            <person name="Schwartz D.C."/>
            <person name="Cheng Z."/>
            <person name="Lindblad-Toh K."/>
            <person name="Eichler E.E."/>
            <person name="Ponting C.P."/>
        </authorList>
    </citation>
    <scope>NUCLEOTIDE SEQUENCE [LARGE SCALE GENOMIC DNA]</scope>
    <source>
        <strain>C57BL/6J</strain>
    </source>
</reference>
<reference key="2">
    <citation type="journal article" date="2004" name="Genome Res.">
        <title>The status, quality, and expansion of the NIH full-length cDNA project: the Mammalian Gene Collection (MGC).</title>
        <authorList>
            <consortium name="The MGC Project Team"/>
        </authorList>
    </citation>
    <scope>NUCLEOTIDE SEQUENCE [LARGE SCALE MRNA]</scope>
    <source>
        <tissue>Brain</tissue>
        <tissue>Testis</tissue>
    </source>
</reference>
<comment type="function">
    <text evidence="1">May function as a regulator of the EGFR pathway. Probable tumor suppressor which may function in cell growth, proliferation and adhesion (By similarity).</text>
</comment>
<comment type="subunit">
    <text evidence="1">May interact with EZR.</text>
</comment>
<comment type="subcellular location">
    <subcellularLocation>
        <location evidence="2">Cell membrane</location>
        <topology evidence="2">Multi-pass membrane protein</topology>
    </subcellularLocation>
    <subcellularLocation>
        <location evidence="2">Cytoplasm</location>
    </subcellularLocation>
    <subcellularLocation>
        <location evidence="2">Nucleus</location>
    </subcellularLocation>
    <subcellularLocation>
        <location evidence="2">Mitochondrion</location>
    </subcellularLocation>
    <subcellularLocation>
        <location evidence="2">Endoplasmic reticulum</location>
    </subcellularLocation>
    <text evidence="2">Also detected in mitochondrion and endoplasmic reticulum.</text>
</comment>
<comment type="PTM">
    <text evidence="1">N-glycosylated.</text>
</comment>
<comment type="similarity">
    <text evidence="5">Belongs to the TMEM8 family.</text>
</comment>
<organism>
    <name type="scientific">Mus musculus</name>
    <name type="common">Mouse</name>
    <dbReference type="NCBI Taxonomy" id="10090"/>
    <lineage>
        <taxon>Eukaryota</taxon>
        <taxon>Metazoa</taxon>
        <taxon>Chordata</taxon>
        <taxon>Craniata</taxon>
        <taxon>Vertebrata</taxon>
        <taxon>Euteleostomi</taxon>
        <taxon>Mammalia</taxon>
        <taxon>Eutheria</taxon>
        <taxon>Euarchontoglires</taxon>
        <taxon>Glires</taxon>
        <taxon>Rodentia</taxon>
        <taxon>Myomorpha</taxon>
        <taxon>Muroidea</taxon>
        <taxon>Muridae</taxon>
        <taxon>Murinae</taxon>
        <taxon>Mus</taxon>
        <taxon>Mus</taxon>
    </lineage>
</organism>
<keyword id="KW-0130">Cell adhesion</keyword>
<keyword id="KW-1003">Cell membrane</keyword>
<keyword id="KW-0963">Cytoplasm</keyword>
<keyword id="KW-1015">Disulfide bond</keyword>
<keyword id="KW-0245">EGF-like domain</keyword>
<keyword id="KW-0256">Endoplasmic reticulum</keyword>
<keyword id="KW-0325">Glycoprotein</keyword>
<keyword id="KW-0341">Growth regulation</keyword>
<keyword id="KW-0472">Membrane</keyword>
<keyword id="KW-0496">Mitochondrion</keyword>
<keyword id="KW-0539">Nucleus</keyword>
<keyword id="KW-1185">Reference proteome</keyword>
<keyword id="KW-0812">Transmembrane</keyword>
<keyword id="KW-1133">Transmembrane helix</keyword>